<reference key="1">
    <citation type="online journal article" date="2000" name="Plant Gene Register">
        <title>Cloning of a cDNA encoding type II S-adenosyl-L-methionine synthetase from Petunia hybrida.</title>
        <authorList>
            <person name="Hsu Y.-H."/>
            <person name="To K.-Y."/>
        </authorList>
        <locator>PGR00-033</locator>
    </citation>
    <scope>NUCLEOTIDE SEQUENCE [MRNA]</scope>
    <source>
        <strain>cv. Violet</strain>
        <tissue>Corolla</tissue>
    </source>
</reference>
<feature type="chain" id="PRO_0000363034" description="S-adenosylmethionine synthase 2">
    <location>
        <begin position="1"/>
        <end position="390"/>
    </location>
</feature>
<feature type="binding site" evidence="3">
    <location>
        <position position="9"/>
    </location>
    <ligand>
        <name>Mg(2+)</name>
        <dbReference type="ChEBI" id="CHEBI:18420"/>
    </ligand>
</feature>
<feature type="binding site" description="in other chain" evidence="4">
    <location>
        <position position="15"/>
    </location>
    <ligand>
        <name>ATP</name>
        <dbReference type="ChEBI" id="CHEBI:30616"/>
        <note>ligand shared between two neighboring subunits</note>
    </ligand>
</feature>
<feature type="binding site" evidence="2">
    <location>
        <position position="43"/>
    </location>
    <ligand>
        <name>K(+)</name>
        <dbReference type="ChEBI" id="CHEBI:29103"/>
    </ligand>
</feature>
<feature type="binding site" description="in other chain" evidence="2">
    <location>
        <position position="56"/>
    </location>
    <ligand>
        <name>L-methionine</name>
        <dbReference type="ChEBI" id="CHEBI:57844"/>
        <note>ligand shared between two neighboring subunits</note>
    </ligand>
</feature>
<feature type="binding site" description="in other chain" evidence="2">
    <location>
        <position position="99"/>
    </location>
    <ligand>
        <name>L-methionine</name>
        <dbReference type="ChEBI" id="CHEBI:57844"/>
        <note>ligand shared between two neighboring subunits</note>
    </ligand>
</feature>
<feature type="binding site" description="in other chain" evidence="4">
    <location>
        <begin position="167"/>
        <end position="169"/>
    </location>
    <ligand>
        <name>ATP</name>
        <dbReference type="ChEBI" id="CHEBI:30616"/>
        <note>ligand shared between two neighboring subunits</note>
    </ligand>
</feature>
<feature type="binding site" description="in other chain" evidence="4">
    <location>
        <begin position="235"/>
        <end position="238"/>
    </location>
    <ligand>
        <name>ATP</name>
        <dbReference type="ChEBI" id="CHEBI:30616"/>
        <note>ligand shared between two neighboring subunits</note>
    </ligand>
</feature>
<feature type="binding site" description="in other chain" evidence="4">
    <location>
        <position position="246"/>
    </location>
    <ligand>
        <name>ATP</name>
        <dbReference type="ChEBI" id="CHEBI:30616"/>
        <note>ligand shared between two neighboring subunits</note>
    </ligand>
</feature>
<feature type="binding site" evidence="2">
    <location>
        <position position="246"/>
    </location>
    <ligand>
        <name>L-methionine</name>
        <dbReference type="ChEBI" id="CHEBI:57844"/>
        <note>ligand shared between two neighboring subunits</note>
    </ligand>
</feature>
<feature type="binding site" description="in other chain" evidence="2">
    <location>
        <begin position="252"/>
        <end position="253"/>
    </location>
    <ligand>
        <name>ATP</name>
        <dbReference type="ChEBI" id="CHEBI:30616"/>
        <note>ligand shared between two neighboring subunits</note>
    </ligand>
</feature>
<feature type="binding site" evidence="2">
    <location>
        <position position="269"/>
    </location>
    <ligand>
        <name>ATP</name>
        <dbReference type="ChEBI" id="CHEBI:30616"/>
        <note>ligand shared between two neighboring subunits</note>
    </ligand>
</feature>
<feature type="binding site" evidence="2">
    <location>
        <position position="273"/>
    </location>
    <ligand>
        <name>ATP</name>
        <dbReference type="ChEBI" id="CHEBI:30616"/>
        <note>ligand shared between two neighboring subunits</note>
    </ligand>
</feature>
<feature type="binding site" evidence="3">
    <location>
        <position position="277"/>
    </location>
    <ligand>
        <name>ATP</name>
        <dbReference type="ChEBI" id="CHEBI:30616"/>
        <note>ligand shared between two neighboring subunits</note>
    </ligand>
</feature>
<feature type="binding site" description="in other chain" evidence="2">
    <location>
        <position position="277"/>
    </location>
    <ligand>
        <name>L-methionine</name>
        <dbReference type="ChEBI" id="CHEBI:57844"/>
        <note>ligand shared between two neighboring subunits</note>
    </ligand>
</feature>
<accession>Q9SBQ5</accession>
<dbReference type="EC" id="2.5.1.6" evidence="5"/>
<dbReference type="EMBL" id="AF183891">
    <property type="protein sequence ID" value="AAD56396.1"/>
    <property type="molecule type" value="mRNA"/>
</dbReference>
<dbReference type="SMR" id="Q9SBQ5"/>
<dbReference type="UniPathway" id="UPA00315">
    <property type="reaction ID" value="UER00080"/>
</dbReference>
<dbReference type="GO" id="GO:0005737">
    <property type="term" value="C:cytoplasm"/>
    <property type="evidence" value="ECO:0007669"/>
    <property type="project" value="UniProtKB-SubCell"/>
</dbReference>
<dbReference type="GO" id="GO:0005524">
    <property type="term" value="F:ATP binding"/>
    <property type="evidence" value="ECO:0007669"/>
    <property type="project" value="UniProtKB-KW"/>
</dbReference>
<dbReference type="GO" id="GO:0046872">
    <property type="term" value="F:metal ion binding"/>
    <property type="evidence" value="ECO:0007669"/>
    <property type="project" value="UniProtKB-KW"/>
</dbReference>
<dbReference type="GO" id="GO:0004478">
    <property type="term" value="F:methionine adenosyltransferase activity"/>
    <property type="evidence" value="ECO:0007669"/>
    <property type="project" value="UniProtKB-EC"/>
</dbReference>
<dbReference type="GO" id="GO:0006730">
    <property type="term" value="P:one-carbon metabolic process"/>
    <property type="evidence" value="ECO:0007669"/>
    <property type="project" value="UniProtKB-KW"/>
</dbReference>
<dbReference type="GO" id="GO:0006556">
    <property type="term" value="P:S-adenosylmethionine biosynthetic process"/>
    <property type="evidence" value="ECO:0007669"/>
    <property type="project" value="UniProtKB-UniPathway"/>
</dbReference>
<dbReference type="CDD" id="cd18079">
    <property type="entry name" value="S-AdoMet_synt"/>
    <property type="match status" value="1"/>
</dbReference>
<dbReference type="FunFam" id="3.30.300.10:FF:000001">
    <property type="entry name" value="S-adenosylmethionine synthase"/>
    <property type="match status" value="1"/>
</dbReference>
<dbReference type="FunFam" id="3.30.300.10:FF:000003">
    <property type="entry name" value="S-adenosylmethionine synthase"/>
    <property type="match status" value="1"/>
</dbReference>
<dbReference type="FunFam" id="3.30.300.10:FF:000004">
    <property type="entry name" value="S-adenosylmethionine synthase"/>
    <property type="match status" value="1"/>
</dbReference>
<dbReference type="Gene3D" id="3.30.300.10">
    <property type="match status" value="3"/>
</dbReference>
<dbReference type="HAMAP" id="MF_00086">
    <property type="entry name" value="S_AdoMet_synth1"/>
    <property type="match status" value="1"/>
</dbReference>
<dbReference type="InterPro" id="IPR022631">
    <property type="entry name" value="ADOMET_SYNTHASE_CS"/>
</dbReference>
<dbReference type="InterPro" id="IPR022630">
    <property type="entry name" value="S-AdoMet_synt_C"/>
</dbReference>
<dbReference type="InterPro" id="IPR022629">
    <property type="entry name" value="S-AdoMet_synt_central"/>
</dbReference>
<dbReference type="InterPro" id="IPR022628">
    <property type="entry name" value="S-AdoMet_synt_N"/>
</dbReference>
<dbReference type="InterPro" id="IPR002133">
    <property type="entry name" value="S-AdoMet_synthetase"/>
</dbReference>
<dbReference type="InterPro" id="IPR022636">
    <property type="entry name" value="S-AdoMet_synthetase_sfam"/>
</dbReference>
<dbReference type="NCBIfam" id="TIGR01034">
    <property type="entry name" value="metK"/>
    <property type="match status" value="1"/>
</dbReference>
<dbReference type="PANTHER" id="PTHR11964">
    <property type="entry name" value="S-ADENOSYLMETHIONINE SYNTHETASE"/>
    <property type="match status" value="1"/>
</dbReference>
<dbReference type="Pfam" id="PF02773">
    <property type="entry name" value="S-AdoMet_synt_C"/>
    <property type="match status" value="1"/>
</dbReference>
<dbReference type="Pfam" id="PF02772">
    <property type="entry name" value="S-AdoMet_synt_M"/>
    <property type="match status" value="1"/>
</dbReference>
<dbReference type="Pfam" id="PF00438">
    <property type="entry name" value="S-AdoMet_synt_N"/>
    <property type="match status" value="1"/>
</dbReference>
<dbReference type="PIRSF" id="PIRSF000497">
    <property type="entry name" value="MAT"/>
    <property type="match status" value="1"/>
</dbReference>
<dbReference type="SUPFAM" id="SSF55973">
    <property type="entry name" value="S-adenosylmethionine synthetase"/>
    <property type="match status" value="3"/>
</dbReference>
<dbReference type="PROSITE" id="PS00376">
    <property type="entry name" value="ADOMET_SYNTHASE_1"/>
    <property type="match status" value="1"/>
</dbReference>
<dbReference type="PROSITE" id="PS00377">
    <property type="entry name" value="ADOMET_SYNTHASE_2"/>
    <property type="match status" value="1"/>
</dbReference>
<name>METK2_PETHY</name>
<sequence>METFLFTSESVNEGHPDKLCDQVSDAILDACLEQDPESKVACETCTKTSMVMVFGEITTKATVDYEKIVRDTCRGIGFTSADVGLDADHCKVLVNIEQQSPDIAQGVHGHLTKKPEEIGAGDQGHMFGYATDETPELMPLTHVLATKLGAKLTEVRKNKTCPWLRPDGKTQVTVEYRNDNGAMIPLRVHTILISTQHDETVTNDQIAQDLKEHVIKPVVPAEYLDENTIFHLNPSGRFVIGGPHGDAGLTGRKIIIDTYGGWGAHGGGAFSGKDPTKVDRSGAYIVRQAAKSVVASGLARRCIVQVSYAIGVAEPLSVFVDTYKTGTIPGKDVLTLIKENFDFRPGMMSINLDLLRGGNFRYQKTAAYGHFGRDDPDFTWETVKVLNPQA</sequence>
<protein>
    <recommendedName>
        <fullName>S-adenosylmethionine synthase 2</fullName>
        <shortName>AdoMet synthase 2</shortName>
        <ecNumber evidence="5">2.5.1.6</ecNumber>
    </recommendedName>
    <alternativeName>
        <fullName>Methionine adenosyltransferase 2</fullName>
        <shortName>MAT 2</shortName>
    </alternativeName>
</protein>
<evidence type="ECO:0000250" key="1"/>
<evidence type="ECO:0000250" key="2">
    <source>
        <dbReference type="UniProtKB" id="P0A817"/>
    </source>
</evidence>
<evidence type="ECO:0000250" key="3">
    <source>
        <dbReference type="UniProtKB" id="P13444"/>
    </source>
</evidence>
<evidence type="ECO:0000250" key="4">
    <source>
        <dbReference type="UniProtKB" id="Q00266"/>
    </source>
</evidence>
<evidence type="ECO:0000250" key="5">
    <source>
        <dbReference type="UniProtKB" id="Q96551"/>
    </source>
</evidence>
<evidence type="ECO:0000305" key="6"/>
<organism>
    <name type="scientific">Petunia hybrida</name>
    <name type="common">Petunia</name>
    <dbReference type="NCBI Taxonomy" id="4102"/>
    <lineage>
        <taxon>Eukaryota</taxon>
        <taxon>Viridiplantae</taxon>
        <taxon>Streptophyta</taxon>
        <taxon>Embryophyta</taxon>
        <taxon>Tracheophyta</taxon>
        <taxon>Spermatophyta</taxon>
        <taxon>Magnoliopsida</taxon>
        <taxon>eudicotyledons</taxon>
        <taxon>Gunneridae</taxon>
        <taxon>Pentapetalae</taxon>
        <taxon>asterids</taxon>
        <taxon>lamiids</taxon>
        <taxon>Solanales</taxon>
        <taxon>Solanaceae</taxon>
        <taxon>Petunioideae</taxon>
        <taxon>Petunia</taxon>
    </lineage>
</organism>
<keyword id="KW-0067">ATP-binding</keyword>
<keyword id="KW-0170">Cobalt</keyword>
<keyword id="KW-0963">Cytoplasm</keyword>
<keyword id="KW-0460">Magnesium</keyword>
<keyword id="KW-0479">Metal-binding</keyword>
<keyword id="KW-0547">Nucleotide-binding</keyword>
<keyword id="KW-0554">One-carbon metabolism</keyword>
<keyword id="KW-0630">Potassium</keyword>
<keyword id="KW-0808">Transferase</keyword>
<proteinExistence type="evidence at transcript level"/>
<comment type="function">
    <text evidence="5">Catalyzes the formation of S-adenosylmethionine from methionine and ATP. The reaction comprises two steps that are both catalyzed by the same enzyme: formation of S-adenosylmethionine (AdoMet) and triphosphate, and subsequent hydrolysis of the triphosphate.</text>
</comment>
<comment type="catalytic activity">
    <reaction evidence="5">
        <text>L-methionine + ATP + H2O = S-adenosyl-L-methionine + phosphate + diphosphate</text>
        <dbReference type="Rhea" id="RHEA:21080"/>
        <dbReference type="ChEBI" id="CHEBI:15377"/>
        <dbReference type="ChEBI" id="CHEBI:30616"/>
        <dbReference type="ChEBI" id="CHEBI:33019"/>
        <dbReference type="ChEBI" id="CHEBI:43474"/>
        <dbReference type="ChEBI" id="CHEBI:57844"/>
        <dbReference type="ChEBI" id="CHEBI:59789"/>
        <dbReference type="EC" id="2.5.1.6"/>
    </reaction>
</comment>
<comment type="cofactor">
    <cofactor evidence="5">
        <name>Mn(2+)</name>
        <dbReference type="ChEBI" id="CHEBI:29035"/>
    </cofactor>
    <cofactor evidence="5">
        <name>Mg(2+)</name>
        <dbReference type="ChEBI" id="CHEBI:18420"/>
    </cofactor>
    <cofactor evidence="5">
        <name>Co(2+)</name>
        <dbReference type="ChEBI" id="CHEBI:48828"/>
    </cofactor>
    <text evidence="3 5">Binds 2 divalent ions per subunit. The metal ions interact primarily with the substrate (By similarity). Can utilize magnesium, manganese or cobalt (in vitro) (By similarity).</text>
</comment>
<comment type="cofactor">
    <cofactor evidence="5">
        <name>K(+)</name>
        <dbReference type="ChEBI" id="CHEBI:29103"/>
    </cofactor>
    <text evidence="3">Binds 1 potassium ion per subunit. The potassium ion interacts primarily with the substrate (By similarity).</text>
</comment>
<comment type="pathway">
    <text evidence="5">Amino-acid biosynthesis; S-adenosyl-L-methionine biosynthesis; S-adenosyl-L-methionine from L-methionine: step 1/1.</text>
</comment>
<comment type="subunit">
    <text evidence="1">Homotetramer.</text>
</comment>
<comment type="subcellular location">
    <subcellularLocation>
        <location evidence="1">Cytoplasm</location>
    </subcellularLocation>
</comment>
<comment type="similarity">
    <text evidence="6">Belongs to the AdoMet synthase family.</text>
</comment>
<gene>
    <name type="primary">SAM2</name>
</gene>